<sequence length="99" mass="11263">MKFSTALLCLLLTAASFSTFVLAQPDSVSIPITCCFSMVKRKIPMQKLESYMRITNSQCPQEAVIFKTKASREICADPKQKWVQDYMNHLDQKSQAQKP</sequence>
<protein>
    <recommendedName>
        <fullName>C-C motif chemokine 8</fullName>
    </recommendedName>
    <alternativeName>
        <fullName>Monocyte chemoattractant protein 2</fullName>
    </alternativeName>
    <alternativeName>
        <fullName>Monocyte chemotactic protein 2</fullName>
        <shortName>MCP-2</shortName>
    </alternativeName>
    <alternativeName>
        <fullName>Small-inducible cytokine A8</fullName>
    </alternativeName>
</protein>
<keyword id="KW-0145">Chemotaxis</keyword>
<keyword id="KW-0202">Cytokine</keyword>
<keyword id="KW-1015">Disulfide bond</keyword>
<keyword id="KW-0358">Heparin-binding</keyword>
<keyword id="KW-0395">Inflammatory response</keyword>
<keyword id="KW-0873">Pyrrolidone carboxylic acid</keyword>
<keyword id="KW-1185">Reference proteome</keyword>
<keyword id="KW-0964">Secreted</keyword>
<keyword id="KW-0732">Signal</keyword>
<evidence type="ECO:0000250" key="1"/>
<evidence type="ECO:0000250" key="2">
    <source>
        <dbReference type="UniProtKB" id="P80075"/>
    </source>
</evidence>
<evidence type="ECO:0000305" key="3"/>
<proteinExistence type="inferred from homology"/>
<reference key="1">
    <citation type="submission" date="2004-02" db="EMBL/GenBank/DDBJ databases">
        <title>Expression analysis of chemokine gene in canine atopic dermatitis.</title>
        <authorList>
            <person name="Tsukui T."/>
            <person name="Sakaguchi M."/>
            <person name="Maeda S."/>
            <person name="Koyanagi M."/>
            <person name="Masuda K."/>
            <person name="Ohno K."/>
            <person name="Tsujimoto H."/>
            <person name="Iwabuchi S."/>
        </authorList>
    </citation>
    <scope>NUCLEOTIDE SEQUENCE [MRNA]</scope>
</reference>
<reference key="2">
    <citation type="submission" date="2004-07" db="EMBL/GenBank/DDBJ databases">
        <title>Identification of coding sequences for canine monocyte chemotactic protein-2 (CCL8), eotaxin 2 (CCL24), eotaxin 3 (CCL26) and C-C chemokine receptor 3 (CCR3).</title>
        <authorList>
            <person name="Peters I.R."/>
            <person name="Peeters D."/>
            <person name="Clercx C."/>
            <person name="Day M.J."/>
        </authorList>
    </citation>
    <scope>NUCLEOTIDE SEQUENCE [MRNA]</scope>
</reference>
<feature type="signal peptide" evidence="2">
    <location>
        <begin position="1"/>
        <end position="23"/>
    </location>
</feature>
<feature type="chain" id="PRO_0000005187" description="C-C motif chemokine 8">
    <location>
        <begin position="24"/>
        <end position="99"/>
    </location>
</feature>
<feature type="modified residue" description="Pyrrolidone carboxylic acid" evidence="2">
    <location>
        <position position="24"/>
    </location>
</feature>
<feature type="disulfide bond" evidence="1">
    <location>
        <begin position="34"/>
        <end position="59"/>
    </location>
</feature>
<feature type="disulfide bond" evidence="1">
    <location>
        <begin position="35"/>
        <end position="75"/>
    </location>
</feature>
<dbReference type="EMBL" id="AB163436">
    <property type="protein sequence ID" value="BAD37149.1"/>
    <property type="molecule type" value="mRNA"/>
</dbReference>
<dbReference type="EMBL" id="AY675234">
    <property type="protein sequence ID" value="AAU14059.1"/>
    <property type="molecule type" value="mRNA"/>
</dbReference>
<dbReference type="RefSeq" id="NP_001005255.1">
    <property type="nucleotide sequence ID" value="NM_001005255.1"/>
</dbReference>
<dbReference type="SMR" id="Q68AY9"/>
<dbReference type="FunCoup" id="Q68AY9">
    <property type="interactions" value="210"/>
</dbReference>
<dbReference type="STRING" id="9615.ENSCAFP00000027105"/>
<dbReference type="PaxDb" id="9612-ENSCAFP00000027105"/>
<dbReference type="Ensembl" id="ENSCAFT00000029147.5">
    <property type="protein sequence ID" value="ENSCAFP00000027105.3"/>
    <property type="gene ID" value="ENSCAFG00000023928.4"/>
</dbReference>
<dbReference type="Ensembl" id="ENSCAFT00030031804.1">
    <property type="protein sequence ID" value="ENSCAFP00030027731.1"/>
    <property type="gene ID" value="ENSCAFG00030017255.1"/>
</dbReference>
<dbReference type="Ensembl" id="ENSCAFT00040021001.1">
    <property type="protein sequence ID" value="ENSCAFP00040018234.1"/>
    <property type="gene ID" value="ENSCAFG00040011377.1"/>
</dbReference>
<dbReference type="Ensembl" id="ENSCAFT00845020092.1">
    <property type="protein sequence ID" value="ENSCAFP00845015744.1"/>
    <property type="gene ID" value="ENSCAFG00845011338.1"/>
</dbReference>
<dbReference type="GeneID" id="448792"/>
<dbReference type="KEGG" id="cfa:448792"/>
<dbReference type="CTD" id="6355"/>
<dbReference type="VEuPathDB" id="HostDB:ENSCAFG00845011338"/>
<dbReference type="VGNC" id="VGNC:55561">
    <property type="gene designation" value="CCL8"/>
</dbReference>
<dbReference type="eggNOG" id="ENOG502S8M4">
    <property type="taxonomic scope" value="Eukaryota"/>
</dbReference>
<dbReference type="GeneTree" id="ENSGT01130000278316"/>
<dbReference type="HOGENOM" id="CLU_141716_1_0_1"/>
<dbReference type="InParanoid" id="Q68AY9"/>
<dbReference type="OMA" id="SIPVTCC"/>
<dbReference type="OrthoDB" id="9930747at2759"/>
<dbReference type="TreeFam" id="TF334888"/>
<dbReference type="Proteomes" id="UP000002254">
    <property type="component" value="Chromosome 9"/>
</dbReference>
<dbReference type="Proteomes" id="UP000694429">
    <property type="component" value="Chromosome 9"/>
</dbReference>
<dbReference type="Proteomes" id="UP000694542">
    <property type="component" value="Chromosome 9"/>
</dbReference>
<dbReference type="Proteomes" id="UP000805418">
    <property type="component" value="Chromosome 9"/>
</dbReference>
<dbReference type="Bgee" id="ENSCAFG00000023928">
    <property type="expression patterns" value="Expressed in cardiac muscle of left ventricle and 34 other cell types or tissues"/>
</dbReference>
<dbReference type="GO" id="GO:0005615">
    <property type="term" value="C:extracellular space"/>
    <property type="evidence" value="ECO:0000318"/>
    <property type="project" value="GO_Central"/>
</dbReference>
<dbReference type="GO" id="GO:0048020">
    <property type="term" value="F:CCR chemokine receptor binding"/>
    <property type="evidence" value="ECO:0000318"/>
    <property type="project" value="GO_Central"/>
</dbReference>
<dbReference type="GO" id="GO:0008009">
    <property type="term" value="F:chemokine activity"/>
    <property type="evidence" value="ECO:0000318"/>
    <property type="project" value="GO_Central"/>
</dbReference>
<dbReference type="GO" id="GO:0008201">
    <property type="term" value="F:heparin binding"/>
    <property type="evidence" value="ECO:0007669"/>
    <property type="project" value="UniProtKB-KW"/>
</dbReference>
<dbReference type="GO" id="GO:0016004">
    <property type="term" value="F:phospholipase activator activity"/>
    <property type="evidence" value="ECO:0007669"/>
    <property type="project" value="Ensembl"/>
</dbReference>
<dbReference type="GO" id="GO:0004672">
    <property type="term" value="F:protein kinase activity"/>
    <property type="evidence" value="ECO:0007669"/>
    <property type="project" value="Ensembl"/>
</dbReference>
<dbReference type="GO" id="GO:0061844">
    <property type="term" value="P:antimicrobial humoral immune response mediated by antimicrobial peptide"/>
    <property type="evidence" value="ECO:0000318"/>
    <property type="project" value="GO_Central"/>
</dbReference>
<dbReference type="GO" id="GO:0006816">
    <property type="term" value="P:calcium ion transport"/>
    <property type="evidence" value="ECO:0007669"/>
    <property type="project" value="Ensembl"/>
</dbReference>
<dbReference type="GO" id="GO:0007267">
    <property type="term" value="P:cell-cell signaling"/>
    <property type="evidence" value="ECO:0007669"/>
    <property type="project" value="Ensembl"/>
</dbReference>
<dbReference type="GO" id="GO:0070098">
    <property type="term" value="P:chemokine-mediated signaling pathway"/>
    <property type="evidence" value="ECO:0000318"/>
    <property type="project" value="GO_Central"/>
</dbReference>
<dbReference type="GO" id="GO:0048245">
    <property type="term" value="P:eosinophil chemotaxis"/>
    <property type="evidence" value="ECO:0000318"/>
    <property type="project" value="GO_Central"/>
</dbReference>
<dbReference type="GO" id="GO:0006887">
    <property type="term" value="P:exocytosis"/>
    <property type="evidence" value="ECO:0007669"/>
    <property type="project" value="Ensembl"/>
</dbReference>
<dbReference type="GO" id="GO:0006954">
    <property type="term" value="P:inflammatory response"/>
    <property type="evidence" value="ECO:0000318"/>
    <property type="project" value="GO_Central"/>
</dbReference>
<dbReference type="GO" id="GO:0006874">
    <property type="term" value="P:intracellular calcium ion homeostasis"/>
    <property type="evidence" value="ECO:0007669"/>
    <property type="project" value="Ensembl"/>
</dbReference>
<dbReference type="GO" id="GO:0044828">
    <property type="term" value="P:negative regulation by host of viral genome replication"/>
    <property type="evidence" value="ECO:0007669"/>
    <property type="project" value="Ensembl"/>
</dbReference>
<dbReference type="GO" id="GO:0030335">
    <property type="term" value="P:positive regulation of cell migration"/>
    <property type="evidence" value="ECO:0000318"/>
    <property type="project" value="GO_Central"/>
</dbReference>
<dbReference type="GO" id="GO:0045663">
    <property type="term" value="P:positive regulation of myoblast differentiation"/>
    <property type="evidence" value="ECO:0007669"/>
    <property type="project" value="Ensembl"/>
</dbReference>
<dbReference type="GO" id="GO:1901741">
    <property type="term" value="P:positive regulation of myoblast fusion"/>
    <property type="evidence" value="ECO:0007669"/>
    <property type="project" value="Ensembl"/>
</dbReference>
<dbReference type="CDD" id="cd00272">
    <property type="entry name" value="Chemokine_CC"/>
    <property type="match status" value="1"/>
</dbReference>
<dbReference type="FunFam" id="2.40.50.40:FF:000002">
    <property type="entry name" value="C-C motif chemokine"/>
    <property type="match status" value="1"/>
</dbReference>
<dbReference type="Gene3D" id="2.40.50.40">
    <property type="match status" value="1"/>
</dbReference>
<dbReference type="InterPro" id="IPR039809">
    <property type="entry name" value="Chemokine_b/g/d"/>
</dbReference>
<dbReference type="InterPro" id="IPR000827">
    <property type="entry name" value="Chemokine_CC_CS"/>
</dbReference>
<dbReference type="InterPro" id="IPR001811">
    <property type="entry name" value="Chemokine_IL8-like_dom"/>
</dbReference>
<dbReference type="InterPro" id="IPR036048">
    <property type="entry name" value="Interleukin_8-like_sf"/>
</dbReference>
<dbReference type="PANTHER" id="PTHR12015:SF209">
    <property type="entry name" value="C-C MOTIF CHEMOKINE 8"/>
    <property type="match status" value="1"/>
</dbReference>
<dbReference type="PANTHER" id="PTHR12015">
    <property type="entry name" value="SMALL INDUCIBLE CYTOKINE A"/>
    <property type="match status" value="1"/>
</dbReference>
<dbReference type="Pfam" id="PF00048">
    <property type="entry name" value="IL8"/>
    <property type="match status" value="1"/>
</dbReference>
<dbReference type="SMART" id="SM00199">
    <property type="entry name" value="SCY"/>
    <property type="match status" value="1"/>
</dbReference>
<dbReference type="SUPFAM" id="SSF54117">
    <property type="entry name" value="Interleukin 8-like chemokines"/>
    <property type="match status" value="1"/>
</dbReference>
<dbReference type="PROSITE" id="PS00472">
    <property type="entry name" value="SMALL_CYTOKINES_CC"/>
    <property type="match status" value="1"/>
</dbReference>
<name>CCL8_CANLF</name>
<organism>
    <name type="scientific">Canis lupus familiaris</name>
    <name type="common">Dog</name>
    <name type="synonym">Canis familiaris</name>
    <dbReference type="NCBI Taxonomy" id="9615"/>
    <lineage>
        <taxon>Eukaryota</taxon>
        <taxon>Metazoa</taxon>
        <taxon>Chordata</taxon>
        <taxon>Craniata</taxon>
        <taxon>Vertebrata</taxon>
        <taxon>Euteleostomi</taxon>
        <taxon>Mammalia</taxon>
        <taxon>Eutheria</taxon>
        <taxon>Laurasiatheria</taxon>
        <taxon>Carnivora</taxon>
        <taxon>Caniformia</taxon>
        <taxon>Canidae</taxon>
        <taxon>Canis</taxon>
    </lineage>
</organism>
<gene>
    <name type="primary">CCL8</name>
    <name type="synonym">MCP2</name>
</gene>
<accession>Q68AY9</accession>
<comment type="function">
    <text evidence="1">Chemotactic factor that attracts monocytes. This protein can bind heparin (By similarity).</text>
</comment>
<comment type="subunit">
    <text evidence="1">Monomer or homodimer; in equilibrium.</text>
</comment>
<comment type="subcellular location">
    <subcellularLocation>
        <location evidence="1">Secreted</location>
    </subcellularLocation>
</comment>
<comment type="similarity">
    <text evidence="3">Belongs to the intercrine beta (chemokine CC) family.</text>
</comment>